<dbReference type="EMBL" id="CP000090">
    <property type="protein sequence ID" value="AAZ61484.1"/>
    <property type="molecule type" value="Genomic_DNA"/>
</dbReference>
<dbReference type="SMR" id="Q46ZE9"/>
<dbReference type="STRING" id="264198.Reut_A2120"/>
<dbReference type="KEGG" id="reu:Reut_A2120"/>
<dbReference type="eggNOG" id="COG0254">
    <property type="taxonomic scope" value="Bacteria"/>
</dbReference>
<dbReference type="HOGENOM" id="CLU_114306_2_2_4"/>
<dbReference type="OrthoDB" id="9803251at2"/>
<dbReference type="GO" id="GO:1990904">
    <property type="term" value="C:ribonucleoprotein complex"/>
    <property type="evidence" value="ECO:0007669"/>
    <property type="project" value="UniProtKB-KW"/>
</dbReference>
<dbReference type="GO" id="GO:0005840">
    <property type="term" value="C:ribosome"/>
    <property type="evidence" value="ECO:0007669"/>
    <property type="project" value="UniProtKB-KW"/>
</dbReference>
<dbReference type="GO" id="GO:0003735">
    <property type="term" value="F:structural constituent of ribosome"/>
    <property type="evidence" value="ECO:0007669"/>
    <property type="project" value="InterPro"/>
</dbReference>
<dbReference type="GO" id="GO:0006412">
    <property type="term" value="P:translation"/>
    <property type="evidence" value="ECO:0007669"/>
    <property type="project" value="UniProtKB-UniRule"/>
</dbReference>
<dbReference type="Gene3D" id="4.10.830.30">
    <property type="entry name" value="Ribosomal protein L31"/>
    <property type="match status" value="1"/>
</dbReference>
<dbReference type="HAMAP" id="MF_00502">
    <property type="entry name" value="Ribosomal_bL31_2"/>
    <property type="match status" value="1"/>
</dbReference>
<dbReference type="InterPro" id="IPR034704">
    <property type="entry name" value="Ribosomal_bL28/bL31-like_sf"/>
</dbReference>
<dbReference type="InterPro" id="IPR002150">
    <property type="entry name" value="Ribosomal_bL31"/>
</dbReference>
<dbReference type="InterPro" id="IPR027493">
    <property type="entry name" value="Ribosomal_bL31_B"/>
</dbReference>
<dbReference type="InterPro" id="IPR042105">
    <property type="entry name" value="Ribosomal_bL31_sf"/>
</dbReference>
<dbReference type="NCBIfam" id="TIGR00105">
    <property type="entry name" value="L31"/>
    <property type="match status" value="1"/>
</dbReference>
<dbReference type="NCBIfam" id="NF000612">
    <property type="entry name" value="PRK00019.1"/>
    <property type="match status" value="1"/>
</dbReference>
<dbReference type="NCBIfam" id="NF002462">
    <property type="entry name" value="PRK01678.1"/>
    <property type="match status" value="1"/>
</dbReference>
<dbReference type="PANTHER" id="PTHR33280">
    <property type="entry name" value="50S RIBOSOMAL PROTEIN L31, CHLOROPLASTIC"/>
    <property type="match status" value="1"/>
</dbReference>
<dbReference type="PANTHER" id="PTHR33280:SF1">
    <property type="entry name" value="LARGE RIBOSOMAL SUBUNIT PROTEIN BL31C"/>
    <property type="match status" value="1"/>
</dbReference>
<dbReference type="Pfam" id="PF01197">
    <property type="entry name" value="Ribosomal_L31"/>
    <property type="match status" value="1"/>
</dbReference>
<dbReference type="PRINTS" id="PR01249">
    <property type="entry name" value="RIBOSOMALL31"/>
</dbReference>
<dbReference type="SUPFAM" id="SSF143800">
    <property type="entry name" value="L28p-like"/>
    <property type="match status" value="1"/>
</dbReference>
<dbReference type="PROSITE" id="PS01143">
    <property type="entry name" value="RIBOSOMAL_L31"/>
    <property type="match status" value="1"/>
</dbReference>
<evidence type="ECO:0000255" key="1">
    <source>
        <dbReference type="HAMAP-Rule" id="MF_00502"/>
    </source>
</evidence>
<evidence type="ECO:0000305" key="2"/>
<proteinExistence type="inferred from homology"/>
<sequence length="86" mass="9837">MKEGIHPNYREVVFQDMSCDFSFITRSTIQTKDTIVKDGKEYPLAKIEVSSESHPFYTGTQKIMDTAGRVEKFRQKFGSKLGKVAK</sequence>
<keyword id="KW-0687">Ribonucleoprotein</keyword>
<keyword id="KW-0689">Ribosomal protein</keyword>
<reference key="1">
    <citation type="journal article" date="2010" name="PLoS ONE">
        <title>The complete multipartite genome sequence of Cupriavidus necator JMP134, a versatile pollutant degrader.</title>
        <authorList>
            <person name="Lykidis A."/>
            <person name="Perez-Pantoja D."/>
            <person name="Ledger T."/>
            <person name="Mavromatis K."/>
            <person name="Anderson I.J."/>
            <person name="Ivanova N.N."/>
            <person name="Hooper S.D."/>
            <person name="Lapidus A."/>
            <person name="Lucas S."/>
            <person name="Gonzalez B."/>
            <person name="Kyrpides N.C."/>
        </authorList>
    </citation>
    <scope>NUCLEOTIDE SEQUENCE [LARGE SCALE GENOMIC DNA]</scope>
    <source>
        <strain>JMP134 / LMG 1197</strain>
    </source>
</reference>
<gene>
    <name evidence="1" type="primary">rpmE2</name>
    <name type="ordered locus">Reut_A2120</name>
</gene>
<protein>
    <recommendedName>
        <fullName evidence="1">Large ribosomal subunit protein bL31B</fullName>
    </recommendedName>
    <alternativeName>
        <fullName evidence="2">50S ribosomal protein L31 type B</fullName>
    </alternativeName>
</protein>
<feature type="chain" id="PRO_0000259116" description="Large ribosomal subunit protein bL31B">
    <location>
        <begin position="1"/>
        <end position="86"/>
    </location>
</feature>
<organism>
    <name type="scientific">Cupriavidus pinatubonensis (strain JMP 134 / LMG 1197)</name>
    <name type="common">Cupriavidus necator (strain JMP 134)</name>
    <dbReference type="NCBI Taxonomy" id="264198"/>
    <lineage>
        <taxon>Bacteria</taxon>
        <taxon>Pseudomonadati</taxon>
        <taxon>Pseudomonadota</taxon>
        <taxon>Betaproteobacteria</taxon>
        <taxon>Burkholderiales</taxon>
        <taxon>Burkholderiaceae</taxon>
        <taxon>Cupriavidus</taxon>
    </lineage>
</organism>
<accession>Q46ZE9</accession>
<comment type="subunit">
    <text evidence="1">Part of the 50S ribosomal subunit.</text>
</comment>
<comment type="similarity">
    <text evidence="1">Belongs to the bacterial ribosomal protein bL31 family. Type B subfamily.</text>
</comment>
<name>RL31B_CUPPJ</name>